<evidence type="ECO:0000250" key="1"/>
<evidence type="ECO:0000250" key="2">
    <source>
        <dbReference type="UniProtKB" id="Q9H3Y8"/>
    </source>
</evidence>
<evidence type="ECO:0000256" key="3">
    <source>
        <dbReference type="SAM" id="MobiDB-lite"/>
    </source>
</evidence>
<evidence type="ECO:0000305" key="4"/>
<comment type="function">
    <text evidence="1">Probable regulator of exocrine pancreas development.</text>
</comment>
<comment type="similarity">
    <text evidence="4">Belongs to the PPDPF family.</text>
</comment>
<name>PPDPF_BOVIN</name>
<dbReference type="EMBL" id="BC102578">
    <property type="protein sequence ID" value="AAI02579.1"/>
    <property type="molecule type" value="mRNA"/>
</dbReference>
<dbReference type="RefSeq" id="NP_001068762.1">
    <property type="nucleotide sequence ID" value="NM_001075294.1"/>
</dbReference>
<dbReference type="FunCoup" id="Q3ZCB6">
    <property type="interactions" value="99"/>
</dbReference>
<dbReference type="STRING" id="9913.ENSBTAP00000047731"/>
<dbReference type="PaxDb" id="9913-ENSBTAP00000047731"/>
<dbReference type="GeneID" id="506990"/>
<dbReference type="KEGG" id="bta:506990"/>
<dbReference type="CTD" id="79144"/>
<dbReference type="eggNOG" id="ENOG502S1KD">
    <property type="taxonomic scope" value="Eukaryota"/>
</dbReference>
<dbReference type="HOGENOM" id="CLU_157362_0_0_1"/>
<dbReference type="InParanoid" id="Q3ZCB6"/>
<dbReference type="OrthoDB" id="9411431at2759"/>
<dbReference type="Proteomes" id="UP000009136">
    <property type="component" value="Unplaced"/>
</dbReference>
<dbReference type="GO" id="GO:0030154">
    <property type="term" value="P:cell differentiation"/>
    <property type="evidence" value="ECO:0007669"/>
    <property type="project" value="UniProtKB-KW"/>
</dbReference>
<dbReference type="InterPro" id="IPR026754">
    <property type="entry name" value="PPDPF"/>
</dbReference>
<dbReference type="PANTHER" id="PTHR14572">
    <property type="entry name" value="PANCREATIC PROGENITOR CELL DIFFERENTIATION AND PROLIFERATION FACTOR"/>
    <property type="match status" value="1"/>
</dbReference>
<dbReference type="Pfam" id="PF15060">
    <property type="entry name" value="PPDFL"/>
    <property type="match status" value="1"/>
</dbReference>
<dbReference type="PRINTS" id="PR02071">
    <property type="entry name" value="PPDPFACTOR"/>
</dbReference>
<accession>Q3ZCB6</accession>
<gene>
    <name type="primary">PPDPF</name>
    <name type="synonym">EXDPF</name>
</gene>
<sequence>MAAIPSSGSLVATHDYYRRRLGSTSSNSSCGSAEYPGEAIPHHPGLPKADPGHWWASFFFGKSTLPFMATVLESPEHSESAQASTSTITCDLAQKAVGKQQPSGQPGKTTAGPRPE</sequence>
<keyword id="KW-0217">Developmental protein</keyword>
<keyword id="KW-0221">Differentiation</keyword>
<keyword id="KW-0597">Phosphoprotein</keyword>
<keyword id="KW-1185">Reference proteome</keyword>
<feature type="chain" id="PRO_0000228099" description="Pancreatic progenitor cell differentiation and proliferation factor">
    <location>
        <begin position="1"/>
        <end position="116"/>
    </location>
</feature>
<feature type="region of interest" description="Disordered" evidence="3">
    <location>
        <begin position="22"/>
        <end position="47"/>
    </location>
</feature>
<feature type="region of interest" description="Disordered" evidence="3">
    <location>
        <begin position="92"/>
        <end position="116"/>
    </location>
</feature>
<feature type="compositionally biased region" description="Low complexity" evidence="3">
    <location>
        <begin position="23"/>
        <end position="32"/>
    </location>
</feature>
<feature type="modified residue" description="Phosphoserine" evidence="2">
    <location>
        <position position="9"/>
    </location>
</feature>
<proteinExistence type="inferred from homology"/>
<protein>
    <recommendedName>
        <fullName>Pancreatic progenitor cell differentiation and proliferation factor</fullName>
    </recommendedName>
    <alternativeName>
        <fullName>Exocrine differentiation and proliferation factor</fullName>
    </alternativeName>
</protein>
<organism>
    <name type="scientific">Bos taurus</name>
    <name type="common">Bovine</name>
    <dbReference type="NCBI Taxonomy" id="9913"/>
    <lineage>
        <taxon>Eukaryota</taxon>
        <taxon>Metazoa</taxon>
        <taxon>Chordata</taxon>
        <taxon>Craniata</taxon>
        <taxon>Vertebrata</taxon>
        <taxon>Euteleostomi</taxon>
        <taxon>Mammalia</taxon>
        <taxon>Eutheria</taxon>
        <taxon>Laurasiatheria</taxon>
        <taxon>Artiodactyla</taxon>
        <taxon>Ruminantia</taxon>
        <taxon>Pecora</taxon>
        <taxon>Bovidae</taxon>
        <taxon>Bovinae</taxon>
        <taxon>Bos</taxon>
    </lineage>
</organism>
<reference key="1">
    <citation type="submission" date="2005-08" db="EMBL/GenBank/DDBJ databases">
        <authorList>
            <consortium name="NIH - Mammalian Gene Collection (MGC) project"/>
        </authorList>
    </citation>
    <scope>NUCLEOTIDE SEQUENCE [LARGE SCALE MRNA]</scope>
    <source>
        <strain>Crossbred X Angus</strain>
        <tissue>Ileum</tissue>
    </source>
</reference>